<name>NRDR_LIMF3</name>
<organism>
    <name type="scientific">Limosilactobacillus fermentum (strain NBRC 3956 / LMG 18251)</name>
    <name type="common">Lactobacillus fermentum</name>
    <dbReference type="NCBI Taxonomy" id="334390"/>
    <lineage>
        <taxon>Bacteria</taxon>
        <taxon>Bacillati</taxon>
        <taxon>Bacillota</taxon>
        <taxon>Bacilli</taxon>
        <taxon>Lactobacillales</taxon>
        <taxon>Lactobacillaceae</taxon>
        <taxon>Limosilactobacillus</taxon>
    </lineage>
</organism>
<comment type="function">
    <text evidence="1">Negatively regulates transcription of bacterial ribonucleotide reductase nrd genes and operons by binding to NrdR-boxes.</text>
</comment>
<comment type="cofactor">
    <cofactor evidence="1">
        <name>Zn(2+)</name>
        <dbReference type="ChEBI" id="CHEBI:29105"/>
    </cofactor>
    <text evidence="1">Binds 1 zinc ion.</text>
</comment>
<comment type="similarity">
    <text evidence="1">Belongs to the NrdR family.</text>
</comment>
<feature type="chain" id="PRO_1000124517" description="Transcriptional repressor NrdR">
    <location>
        <begin position="1"/>
        <end position="152"/>
    </location>
</feature>
<feature type="domain" description="ATP-cone" evidence="1">
    <location>
        <begin position="49"/>
        <end position="139"/>
    </location>
</feature>
<feature type="zinc finger region" evidence="1">
    <location>
        <begin position="3"/>
        <end position="34"/>
    </location>
</feature>
<gene>
    <name evidence="1" type="primary">nrdR</name>
    <name type="ordered locus">LAF_1314</name>
</gene>
<reference key="1">
    <citation type="journal article" date="2008" name="DNA Res.">
        <title>Comparative genome analysis of Lactobacillus reuteri and Lactobacillus fermentum reveal a genomic island for reuterin and cobalamin production.</title>
        <authorList>
            <person name="Morita H."/>
            <person name="Toh H."/>
            <person name="Fukuda S."/>
            <person name="Horikawa H."/>
            <person name="Oshima K."/>
            <person name="Suzuki T."/>
            <person name="Murakami M."/>
            <person name="Hisamatsu S."/>
            <person name="Kato Y."/>
            <person name="Takizawa T."/>
            <person name="Fukuoka H."/>
            <person name="Yoshimura T."/>
            <person name="Itoh K."/>
            <person name="O'Sullivan D.J."/>
            <person name="McKay L.L."/>
            <person name="Ohno H."/>
            <person name="Kikuchi J."/>
            <person name="Masaoka T."/>
            <person name="Hattori M."/>
        </authorList>
    </citation>
    <scope>NUCLEOTIDE SEQUENCE [LARGE SCALE GENOMIC DNA]</scope>
    <source>
        <strain>NBRC 3956 / LMG 18251</strain>
    </source>
</reference>
<dbReference type="EMBL" id="AP008937">
    <property type="protein sequence ID" value="BAG27650.1"/>
    <property type="molecule type" value="Genomic_DNA"/>
</dbReference>
<dbReference type="RefSeq" id="WP_003686203.1">
    <property type="nucleotide sequence ID" value="NC_010610.1"/>
</dbReference>
<dbReference type="SMR" id="B2GDB8"/>
<dbReference type="GeneID" id="83714236"/>
<dbReference type="KEGG" id="lfe:LAF_1314"/>
<dbReference type="eggNOG" id="COG1327">
    <property type="taxonomic scope" value="Bacteria"/>
</dbReference>
<dbReference type="HOGENOM" id="CLU_108412_0_0_9"/>
<dbReference type="Proteomes" id="UP000001697">
    <property type="component" value="Chromosome"/>
</dbReference>
<dbReference type="GO" id="GO:0005524">
    <property type="term" value="F:ATP binding"/>
    <property type="evidence" value="ECO:0007669"/>
    <property type="project" value="UniProtKB-KW"/>
</dbReference>
<dbReference type="GO" id="GO:0003677">
    <property type="term" value="F:DNA binding"/>
    <property type="evidence" value="ECO:0007669"/>
    <property type="project" value="UniProtKB-KW"/>
</dbReference>
<dbReference type="GO" id="GO:0008270">
    <property type="term" value="F:zinc ion binding"/>
    <property type="evidence" value="ECO:0007669"/>
    <property type="project" value="UniProtKB-UniRule"/>
</dbReference>
<dbReference type="GO" id="GO:0045892">
    <property type="term" value="P:negative regulation of DNA-templated transcription"/>
    <property type="evidence" value="ECO:0007669"/>
    <property type="project" value="UniProtKB-UniRule"/>
</dbReference>
<dbReference type="HAMAP" id="MF_00440">
    <property type="entry name" value="NrdR"/>
    <property type="match status" value="1"/>
</dbReference>
<dbReference type="InterPro" id="IPR005144">
    <property type="entry name" value="ATP-cone_dom"/>
</dbReference>
<dbReference type="InterPro" id="IPR055173">
    <property type="entry name" value="NrdR-like_N"/>
</dbReference>
<dbReference type="InterPro" id="IPR003796">
    <property type="entry name" value="RNR_NrdR-like"/>
</dbReference>
<dbReference type="NCBIfam" id="TIGR00244">
    <property type="entry name" value="transcriptional regulator NrdR"/>
    <property type="match status" value="1"/>
</dbReference>
<dbReference type="PANTHER" id="PTHR30455">
    <property type="entry name" value="TRANSCRIPTIONAL REPRESSOR NRDR"/>
    <property type="match status" value="1"/>
</dbReference>
<dbReference type="PANTHER" id="PTHR30455:SF2">
    <property type="entry name" value="TRANSCRIPTIONAL REPRESSOR NRDR"/>
    <property type="match status" value="1"/>
</dbReference>
<dbReference type="Pfam" id="PF03477">
    <property type="entry name" value="ATP-cone"/>
    <property type="match status" value="1"/>
</dbReference>
<dbReference type="Pfam" id="PF22811">
    <property type="entry name" value="Zn_ribbon_NrdR"/>
    <property type="match status" value="1"/>
</dbReference>
<dbReference type="PROSITE" id="PS51161">
    <property type="entry name" value="ATP_CONE"/>
    <property type="match status" value="1"/>
</dbReference>
<accession>B2GDB8</accession>
<keyword id="KW-0067">ATP-binding</keyword>
<keyword id="KW-0238">DNA-binding</keyword>
<keyword id="KW-0479">Metal-binding</keyword>
<keyword id="KW-0547">Nucleotide-binding</keyword>
<keyword id="KW-1185">Reference proteome</keyword>
<keyword id="KW-0678">Repressor</keyword>
<keyword id="KW-0804">Transcription</keyword>
<keyword id="KW-0805">Transcription regulation</keyword>
<keyword id="KW-0862">Zinc</keyword>
<keyword id="KW-0863">Zinc-finger</keyword>
<proteinExistence type="inferred from homology"/>
<sequence>MLCPHCHHNGSRVIDSRPAEDGMSIRRRRECVNCGFRFTTFERYEETPLLVVKKDGTREEFNRQKILNGLVRSAEKRPVSMDKLTKIADHVEARVRRLGENEVSSQVIGEFVMNELKPVDEIAYIRFASVYRQFKDVDAFFKEIESMKKEER</sequence>
<protein>
    <recommendedName>
        <fullName evidence="1">Transcriptional repressor NrdR</fullName>
    </recommendedName>
</protein>
<evidence type="ECO:0000255" key="1">
    <source>
        <dbReference type="HAMAP-Rule" id="MF_00440"/>
    </source>
</evidence>